<keyword id="KW-0134">Cell wall</keyword>
<keyword id="KW-0903">Direct protein sequencing</keyword>
<keyword id="KW-1185">Reference proteome</keyword>
<keyword id="KW-0964">Secreted</keyword>
<comment type="subcellular location">
    <subcellularLocation>
        <location evidence="1">Secreted</location>
        <location evidence="1">Cell wall</location>
    </subcellularLocation>
</comment>
<feature type="chain" id="PRO_0000079658" description="39 kDa cell wall protein">
    <location>
        <begin position="1"/>
        <end position="11" status="greater than"/>
    </location>
</feature>
<feature type="non-terminal residue" evidence="2">
    <location>
        <position position="11"/>
    </location>
</feature>
<organism>
    <name type="scientific">Solanum lycopersicum</name>
    <name type="common">Tomato</name>
    <name type="synonym">Lycopersicon esculentum</name>
    <dbReference type="NCBI Taxonomy" id="4081"/>
    <lineage>
        <taxon>Eukaryota</taxon>
        <taxon>Viridiplantae</taxon>
        <taxon>Streptophyta</taxon>
        <taxon>Embryophyta</taxon>
        <taxon>Tracheophyta</taxon>
        <taxon>Spermatophyta</taxon>
        <taxon>Magnoliopsida</taxon>
        <taxon>eudicotyledons</taxon>
        <taxon>Gunneridae</taxon>
        <taxon>Pentapetalae</taxon>
        <taxon>asterids</taxon>
        <taxon>lamiids</taxon>
        <taxon>Solanales</taxon>
        <taxon>Solanaceae</taxon>
        <taxon>Solanoideae</taxon>
        <taxon>Solaneae</taxon>
        <taxon>Solanum</taxon>
        <taxon>Solanum subgen. Lycopersicon</taxon>
    </lineage>
</organism>
<sequence length="11" mass="1035">SPVEGGPXGXL</sequence>
<reference evidence="3" key="1">
    <citation type="journal article" date="1997" name="J. Biol. Chem.">
        <title>Differential extraction and protein sequencing reveals major differences in patterns of primary cell wall proteins from plants.</title>
        <authorList>
            <person name="Robertson D."/>
            <person name="Mitchell G.P."/>
            <person name="Gilroy J.S."/>
            <person name="Gerrish C."/>
            <person name="Bolwell G.P."/>
            <person name="Slabas A.R."/>
        </authorList>
    </citation>
    <scope>PROTEIN SEQUENCE</scope>
    <scope>SUBCELLULAR LOCATION</scope>
</reference>
<dbReference type="InParanoid" id="P80807"/>
<dbReference type="Proteomes" id="UP000004994">
    <property type="component" value="Unplaced"/>
</dbReference>
<dbReference type="GO" id="GO:0005576">
    <property type="term" value="C:extracellular region"/>
    <property type="evidence" value="ECO:0007669"/>
    <property type="project" value="UniProtKB-KW"/>
</dbReference>
<evidence type="ECO:0000269" key="1">
    <source>
    </source>
</evidence>
<evidence type="ECO:0000303" key="2">
    <source>
    </source>
</evidence>
<evidence type="ECO:0000305" key="3"/>
<proteinExistence type="evidence at protein level"/>
<protein>
    <recommendedName>
        <fullName>39 kDa cell wall protein</fullName>
    </recommendedName>
</protein>
<accession>P80807</accession>
<name>CWP10_SOLLC</name>